<feature type="chain" id="PRO_0000154849" description="Probable tRNA sulfurtransferase">
    <location>
        <begin position="1"/>
        <end position="385"/>
    </location>
</feature>
<feature type="domain" description="THUMP" evidence="1">
    <location>
        <begin position="65"/>
        <end position="165"/>
    </location>
</feature>
<feature type="binding site" evidence="1">
    <location>
        <begin position="183"/>
        <end position="184"/>
    </location>
    <ligand>
        <name>ATP</name>
        <dbReference type="ChEBI" id="CHEBI:30616"/>
    </ligand>
</feature>
<feature type="binding site" evidence="1">
    <location>
        <begin position="208"/>
        <end position="209"/>
    </location>
    <ligand>
        <name>ATP</name>
        <dbReference type="ChEBI" id="CHEBI:30616"/>
    </ligand>
</feature>
<feature type="binding site" evidence="1">
    <location>
        <position position="267"/>
    </location>
    <ligand>
        <name>ATP</name>
        <dbReference type="ChEBI" id="CHEBI:30616"/>
    </ligand>
</feature>
<feature type="binding site" evidence="1">
    <location>
        <position position="285"/>
    </location>
    <ligand>
        <name>ATP</name>
        <dbReference type="ChEBI" id="CHEBI:30616"/>
    </ligand>
</feature>
<feature type="binding site" evidence="1">
    <location>
        <position position="294"/>
    </location>
    <ligand>
        <name>ATP</name>
        <dbReference type="ChEBI" id="CHEBI:30616"/>
    </ligand>
</feature>
<keyword id="KW-0067">ATP-binding</keyword>
<keyword id="KW-0963">Cytoplasm</keyword>
<keyword id="KW-0547">Nucleotide-binding</keyword>
<keyword id="KW-1185">Reference proteome</keyword>
<keyword id="KW-0694">RNA-binding</keyword>
<keyword id="KW-0784">Thiamine biosynthesis</keyword>
<keyword id="KW-0808">Transferase</keyword>
<keyword id="KW-0820">tRNA-binding</keyword>
<evidence type="ECO:0000255" key="1">
    <source>
        <dbReference type="HAMAP-Rule" id="MF_00021"/>
    </source>
</evidence>
<accession>P47612</accession>
<dbReference type="EC" id="2.8.1.4" evidence="1"/>
<dbReference type="EMBL" id="L43967">
    <property type="protein sequence ID" value="AAC71599.1"/>
    <property type="molecule type" value="Genomic_DNA"/>
</dbReference>
<dbReference type="PIR" id="B64241">
    <property type="entry name" value="B64241"/>
</dbReference>
<dbReference type="RefSeq" id="WP_009885937.1">
    <property type="nucleotide sequence ID" value="NC_000908.2"/>
</dbReference>
<dbReference type="SMR" id="P47612"/>
<dbReference type="FunCoup" id="P47612">
    <property type="interactions" value="31"/>
</dbReference>
<dbReference type="STRING" id="243273.MG_372"/>
<dbReference type="GeneID" id="88282555"/>
<dbReference type="KEGG" id="mge:MG_372"/>
<dbReference type="eggNOG" id="COG0301">
    <property type="taxonomic scope" value="Bacteria"/>
</dbReference>
<dbReference type="HOGENOM" id="CLU_037952_4_0_14"/>
<dbReference type="InParanoid" id="P47612"/>
<dbReference type="OrthoDB" id="9773948at2"/>
<dbReference type="BioCyc" id="MGEN243273:G1GJ2-466-MONOMER"/>
<dbReference type="UniPathway" id="UPA00060"/>
<dbReference type="Proteomes" id="UP000000807">
    <property type="component" value="Chromosome"/>
</dbReference>
<dbReference type="GO" id="GO:0005829">
    <property type="term" value="C:cytosol"/>
    <property type="evidence" value="ECO:0000318"/>
    <property type="project" value="GO_Central"/>
</dbReference>
<dbReference type="GO" id="GO:0005524">
    <property type="term" value="F:ATP binding"/>
    <property type="evidence" value="ECO:0007669"/>
    <property type="project" value="UniProtKB-UniRule"/>
</dbReference>
<dbReference type="GO" id="GO:0004810">
    <property type="term" value="F:CCA tRNA nucleotidyltransferase activity"/>
    <property type="evidence" value="ECO:0007669"/>
    <property type="project" value="InterPro"/>
</dbReference>
<dbReference type="GO" id="GO:0000049">
    <property type="term" value="F:tRNA binding"/>
    <property type="evidence" value="ECO:0007669"/>
    <property type="project" value="UniProtKB-UniRule"/>
</dbReference>
<dbReference type="GO" id="GO:0140741">
    <property type="term" value="F:tRNA-uracil-4 sulfurtransferase activity"/>
    <property type="evidence" value="ECO:0007669"/>
    <property type="project" value="UniProtKB-EC"/>
</dbReference>
<dbReference type="GO" id="GO:0009228">
    <property type="term" value="P:thiamine biosynthetic process"/>
    <property type="evidence" value="ECO:0007669"/>
    <property type="project" value="UniProtKB-KW"/>
</dbReference>
<dbReference type="GO" id="GO:0009229">
    <property type="term" value="P:thiamine diphosphate biosynthetic process"/>
    <property type="evidence" value="ECO:0007669"/>
    <property type="project" value="UniProtKB-UniRule"/>
</dbReference>
<dbReference type="GO" id="GO:0052837">
    <property type="term" value="P:thiazole biosynthetic process"/>
    <property type="evidence" value="ECO:0000318"/>
    <property type="project" value="GO_Central"/>
</dbReference>
<dbReference type="GO" id="GO:0002937">
    <property type="term" value="P:tRNA 4-thiouridine biosynthesis"/>
    <property type="evidence" value="ECO:0000318"/>
    <property type="project" value="GO_Central"/>
</dbReference>
<dbReference type="CDD" id="cd01712">
    <property type="entry name" value="PPase_ThiI"/>
    <property type="match status" value="1"/>
</dbReference>
<dbReference type="CDD" id="cd11716">
    <property type="entry name" value="THUMP_ThiI"/>
    <property type="match status" value="1"/>
</dbReference>
<dbReference type="FunFam" id="3.40.50.620:FF:000053">
    <property type="entry name" value="Probable tRNA sulfurtransferase"/>
    <property type="match status" value="1"/>
</dbReference>
<dbReference type="Gene3D" id="3.30.2130.30">
    <property type="match status" value="1"/>
</dbReference>
<dbReference type="Gene3D" id="3.40.50.620">
    <property type="entry name" value="HUPs"/>
    <property type="match status" value="1"/>
</dbReference>
<dbReference type="HAMAP" id="MF_00021">
    <property type="entry name" value="ThiI"/>
    <property type="match status" value="1"/>
</dbReference>
<dbReference type="InterPro" id="IPR014729">
    <property type="entry name" value="Rossmann-like_a/b/a_fold"/>
</dbReference>
<dbReference type="InterPro" id="IPR020536">
    <property type="entry name" value="ThiI_AANH"/>
</dbReference>
<dbReference type="InterPro" id="IPR054173">
    <property type="entry name" value="ThiI_fer"/>
</dbReference>
<dbReference type="InterPro" id="IPR049961">
    <property type="entry name" value="ThiI_N"/>
</dbReference>
<dbReference type="InterPro" id="IPR004114">
    <property type="entry name" value="THUMP_dom"/>
</dbReference>
<dbReference type="InterPro" id="IPR049962">
    <property type="entry name" value="THUMP_ThiI"/>
</dbReference>
<dbReference type="InterPro" id="IPR003720">
    <property type="entry name" value="tRNA_STrfase"/>
</dbReference>
<dbReference type="InterPro" id="IPR050102">
    <property type="entry name" value="tRNA_sulfurtransferase_ThiI"/>
</dbReference>
<dbReference type="NCBIfam" id="TIGR00342">
    <property type="entry name" value="tRNA uracil 4-sulfurtransferase ThiI"/>
    <property type="match status" value="1"/>
</dbReference>
<dbReference type="PANTHER" id="PTHR43209">
    <property type="entry name" value="TRNA SULFURTRANSFERASE"/>
    <property type="match status" value="1"/>
</dbReference>
<dbReference type="PANTHER" id="PTHR43209:SF1">
    <property type="entry name" value="TRNA SULFURTRANSFERASE"/>
    <property type="match status" value="1"/>
</dbReference>
<dbReference type="Pfam" id="PF02568">
    <property type="entry name" value="ThiI"/>
    <property type="match status" value="1"/>
</dbReference>
<dbReference type="Pfam" id="PF22025">
    <property type="entry name" value="ThiI_fer"/>
    <property type="match status" value="1"/>
</dbReference>
<dbReference type="Pfam" id="PF02926">
    <property type="entry name" value="THUMP"/>
    <property type="match status" value="1"/>
</dbReference>
<dbReference type="SMART" id="SM00981">
    <property type="entry name" value="THUMP"/>
    <property type="match status" value="1"/>
</dbReference>
<dbReference type="SUPFAM" id="SSF52402">
    <property type="entry name" value="Adenine nucleotide alpha hydrolases-like"/>
    <property type="match status" value="1"/>
</dbReference>
<dbReference type="SUPFAM" id="SSF143437">
    <property type="entry name" value="THUMP domain-like"/>
    <property type="match status" value="1"/>
</dbReference>
<dbReference type="PROSITE" id="PS51165">
    <property type="entry name" value="THUMP"/>
    <property type="match status" value="1"/>
</dbReference>
<reference key="1">
    <citation type="journal article" date="1995" name="Science">
        <title>The minimal gene complement of Mycoplasma genitalium.</title>
        <authorList>
            <person name="Fraser C.M."/>
            <person name="Gocayne J.D."/>
            <person name="White O."/>
            <person name="Adams M.D."/>
            <person name="Clayton R.A."/>
            <person name="Fleischmann R.D."/>
            <person name="Bult C.J."/>
            <person name="Kerlavage A.R."/>
            <person name="Sutton G.G."/>
            <person name="Kelley J.M."/>
            <person name="Fritchman J.L."/>
            <person name="Weidman J.F."/>
            <person name="Small K.V."/>
            <person name="Sandusky M."/>
            <person name="Fuhrmann J.L."/>
            <person name="Nguyen D.T."/>
            <person name="Utterback T.R."/>
            <person name="Saudek D.M."/>
            <person name="Phillips C.A."/>
            <person name="Merrick J.M."/>
            <person name="Tomb J.-F."/>
            <person name="Dougherty B.A."/>
            <person name="Bott K.F."/>
            <person name="Hu P.-C."/>
            <person name="Lucier T.S."/>
            <person name="Peterson S.N."/>
            <person name="Smith H.O."/>
            <person name="Hutchison C.A. III"/>
            <person name="Venter J.C."/>
        </authorList>
    </citation>
    <scope>NUCLEOTIDE SEQUENCE [LARGE SCALE GENOMIC DNA]</scope>
    <source>
        <strain>ATCC 33530 / DSM 19775 / NCTC 10195 / G37</strain>
    </source>
</reference>
<protein>
    <recommendedName>
        <fullName evidence="1">Probable tRNA sulfurtransferase</fullName>
        <ecNumber evidence="1">2.8.1.4</ecNumber>
    </recommendedName>
    <alternativeName>
        <fullName evidence="1">Sulfur carrier protein ThiS sulfurtransferase</fullName>
    </alternativeName>
    <alternativeName>
        <fullName evidence="1">Thiamine biosynthesis protein ThiI</fullName>
    </alternativeName>
    <alternativeName>
        <fullName evidence="1">tRNA 4-thiouridine synthase</fullName>
    </alternativeName>
</protein>
<sequence>MELNSEDVLVARYGELVLKGKNRSYFTKQLKINIKKAFKKLEINNSIVYEFDRIVVFDIKKEQRAILQELFSFLPGISLFFFASQIVREENKLLDLLFNLFKDFNSFKLEVKRRDKNFAENSSNFKKYLAVKLFEKYQLKGVINNPEIIANIEILKEHFLVFTERFKGKGGLPVYSSGKALVLLSGGIDSPVAASLVMQRGFNIDFITFINEPNKNQKTIEKITRLANLISFNKTICSGKLLVFDFTAIQKELIHISNESYRIVLMRRVFYKAASMFKYDCLVTGEVLGQVASQTIENLKVIQSATPDTFIVRPLIGFSKDKIIELAKFFNTFDISIEQHLDTCSEFSPKNPTTKAKLINVEKLESELIFLNDLIEKGVSELSND</sequence>
<organism>
    <name type="scientific">Mycoplasma genitalium (strain ATCC 33530 / DSM 19775 / NCTC 10195 / G37)</name>
    <name type="common">Mycoplasmoides genitalium</name>
    <dbReference type="NCBI Taxonomy" id="243273"/>
    <lineage>
        <taxon>Bacteria</taxon>
        <taxon>Bacillati</taxon>
        <taxon>Mycoplasmatota</taxon>
        <taxon>Mycoplasmoidales</taxon>
        <taxon>Mycoplasmoidaceae</taxon>
        <taxon>Mycoplasmoides</taxon>
    </lineage>
</organism>
<gene>
    <name evidence="1" type="primary">thiI</name>
    <name type="ordered locus">MG372</name>
</gene>
<proteinExistence type="inferred from homology"/>
<name>THII_MYCGE</name>
<comment type="function">
    <text evidence="1">Catalyzes the ATP-dependent transfer of a sulfur to tRNA to produce 4-thiouridine in position 8 of tRNAs, which functions as a near-UV photosensor. Also catalyzes the transfer of sulfur to the sulfur carrier protein ThiS, forming ThiS-thiocarboxylate. This is a step in the synthesis of thiazole, in the thiamine biosynthesis pathway. The sulfur is donated as persulfide by IscS.</text>
</comment>
<comment type="catalytic activity">
    <reaction evidence="1">
        <text>[ThiI sulfur-carrier protein]-S-sulfanyl-L-cysteine + a uridine in tRNA + 2 reduced [2Fe-2S]-[ferredoxin] + ATP + H(+) = [ThiI sulfur-carrier protein]-L-cysteine + a 4-thiouridine in tRNA + 2 oxidized [2Fe-2S]-[ferredoxin] + AMP + diphosphate</text>
        <dbReference type="Rhea" id="RHEA:24176"/>
        <dbReference type="Rhea" id="RHEA-COMP:10000"/>
        <dbReference type="Rhea" id="RHEA-COMP:10001"/>
        <dbReference type="Rhea" id="RHEA-COMP:13337"/>
        <dbReference type="Rhea" id="RHEA-COMP:13338"/>
        <dbReference type="Rhea" id="RHEA-COMP:13339"/>
        <dbReference type="Rhea" id="RHEA-COMP:13340"/>
        <dbReference type="ChEBI" id="CHEBI:15378"/>
        <dbReference type="ChEBI" id="CHEBI:29950"/>
        <dbReference type="ChEBI" id="CHEBI:30616"/>
        <dbReference type="ChEBI" id="CHEBI:33019"/>
        <dbReference type="ChEBI" id="CHEBI:33737"/>
        <dbReference type="ChEBI" id="CHEBI:33738"/>
        <dbReference type="ChEBI" id="CHEBI:61963"/>
        <dbReference type="ChEBI" id="CHEBI:65315"/>
        <dbReference type="ChEBI" id="CHEBI:136798"/>
        <dbReference type="ChEBI" id="CHEBI:456215"/>
        <dbReference type="EC" id="2.8.1.4"/>
    </reaction>
</comment>
<comment type="catalytic activity">
    <reaction evidence="1">
        <text>[ThiS sulfur-carrier protein]-C-terminal Gly-Gly-AMP + S-sulfanyl-L-cysteinyl-[cysteine desulfurase] + AH2 = [ThiS sulfur-carrier protein]-C-terminal-Gly-aminoethanethioate + L-cysteinyl-[cysteine desulfurase] + A + AMP + 2 H(+)</text>
        <dbReference type="Rhea" id="RHEA:43340"/>
        <dbReference type="Rhea" id="RHEA-COMP:12157"/>
        <dbReference type="Rhea" id="RHEA-COMP:12158"/>
        <dbReference type="Rhea" id="RHEA-COMP:12910"/>
        <dbReference type="Rhea" id="RHEA-COMP:19908"/>
        <dbReference type="ChEBI" id="CHEBI:13193"/>
        <dbReference type="ChEBI" id="CHEBI:15378"/>
        <dbReference type="ChEBI" id="CHEBI:17499"/>
        <dbReference type="ChEBI" id="CHEBI:29950"/>
        <dbReference type="ChEBI" id="CHEBI:61963"/>
        <dbReference type="ChEBI" id="CHEBI:90618"/>
        <dbReference type="ChEBI" id="CHEBI:232372"/>
        <dbReference type="ChEBI" id="CHEBI:456215"/>
    </reaction>
</comment>
<comment type="pathway">
    <text evidence="1">Cofactor biosynthesis; thiamine diphosphate biosynthesis.</text>
</comment>
<comment type="subcellular location">
    <subcellularLocation>
        <location evidence="1">Cytoplasm</location>
    </subcellularLocation>
</comment>
<comment type="similarity">
    <text evidence="1">Belongs to the ThiI family.</text>
</comment>